<protein>
    <recommendedName>
        <fullName evidence="1">Nucleoid occlusion factor SlmA</fullName>
    </recommendedName>
</protein>
<feature type="chain" id="PRO_1000216091" description="Nucleoid occlusion factor SlmA">
    <location>
        <begin position="1"/>
        <end position="198"/>
    </location>
</feature>
<feature type="domain" description="HTH tetR-type" evidence="1">
    <location>
        <begin position="10"/>
        <end position="70"/>
    </location>
</feature>
<feature type="DNA-binding region" description="H-T-H motif" evidence="1">
    <location>
        <begin position="33"/>
        <end position="52"/>
    </location>
</feature>
<feature type="coiled-coil region" evidence="1">
    <location>
        <begin position="117"/>
        <end position="144"/>
    </location>
</feature>
<sequence length="198" mass="22836">MAEKQTAKRNRREEILQSLALMLESSDGSQRITTAKLAASVGVSEAALYRHFPSKTRMFDSLIEFIEDSLITRINLILKDEKDTTARLRLIVLLLLGFGERNPGLTRILTGHALMFEQDRLQGRINQLFERIEAQLRQVLREKRMREGEGYTTDETLLASQILAFCEGMLSRFVRSEFKYRPTDDFDARWPLIAAQLQ</sequence>
<reference key="1">
    <citation type="journal article" date="2009" name="J. Bacteriol.">
        <title>Genomic sequencing reveals regulatory mutations and recombinational events in the widely used MC4100 lineage of Escherichia coli K-12.</title>
        <authorList>
            <person name="Ferenci T."/>
            <person name="Zhou Z."/>
            <person name="Betteridge T."/>
            <person name="Ren Y."/>
            <person name="Liu Y."/>
            <person name="Feng L."/>
            <person name="Reeves P.R."/>
            <person name="Wang L."/>
        </authorList>
    </citation>
    <scope>NUCLEOTIDE SEQUENCE [LARGE SCALE GENOMIC DNA]</scope>
    <source>
        <strain>K12 / MC4100 / BW2952</strain>
    </source>
</reference>
<keyword id="KW-0131">Cell cycle</keyword>
<keyword id="KW-0132">Cell division</keyword>
<keyword id="KW-0175">Coiled coil</keyword>
<keyword id="KW-0963">Cytoplasm</keyword>
<keyword id="KW-0238">DNA-binding</keyword>
<organism>
    <name type="scientific">Escherichia coli (strain K12 / MC4100 / BW2952)</name>
    <dbReference type="NCBI Taxonomy" id="595496"/>
    <lineage>
        <taxon>Bacteria</taxon>
        <taxon>Pseudomonadati</taxon>
        <taxon>Pseudomonadota</taxon>
        <taxon>Gammaproteobacteria</taxon>
        <taxon>Enterobacterales</taxon>
        <taxon>Enterobacteriaceae</taxon>
        <taxon>Escherichia</taxon>
    </lineage>
</organism>
<name>SLMA_ECOBW</name>
<proteinExistence type="inferred from homology"/>
<dbReference type="EMBL" id="CP001396">
    <property type="protein sequence ID" value="ACR62780.1"/>
    <property type="molecule type" value="Genomic_DNA"/>
</dbReference>
<dbReference type="RefSeq" id="WP_000818601.1">
    <property type="nucleotide sequence ID" value="NC_012759.1"/>
</dbReference>
<dbReference type="SMR" id="C4ZXN3"/>
<dbReference type="GeneID" id="93778356"/>
<dbReference type="KEGG" id="ebw:BWG_3332"/>
<dbReference type="HOGENOM" id="CLU_069356_5_0_6"/>
<dbReference type="GO" id="GO:0043590">
    <property type="term" value="C:bacterial nucleoid"/>
    <property type="evidence" value="ECO:0007669"/>
    <property type="project" value="UniProtKB-UniRule"/>
</dbReference>
<dbReference type="GO" id="GO:0005737">
    <property type="term" value="C:cytoplasm"/>
    <property type="evidence" value="ECO:0007669"/>
    <property type="project" value="UniProtKB-UniRule"/>
</dbReference>
<dbReference type="GO" id="GO:0003700">
    <property type="term" value="F:DNA-binding transcription factor activity"/>
    <property type="evidence" value="ECO:0007669"/>
    <property type="project" value="TreeGrafter"/>
</dbReference>
<dbReference type="GO" id="GO:0000976">
    <property type="term" value="F:transcription cis-regulatory region binding"/>
    <property type="evidence" value="ECO:0007669"/>
    <property type="project" value="TreeGrafter"/>
</dbReference>
<dbReference type="GO" id="GO:0051301">
    <property type="term" value="P:cell division"/>
    <property type="evidence" value="ECO:0007669"/>
    <property type="project" value="UniProtKB-KW"/>
</dbReference>
<dbReference type="GO" id="GO:0010974">
    <property type="term" value="P:negative regulation of division septum assembly"/>
    <property type="evidence" value="ECO:0007669"/>
    <property type="project" value="InterPro"/>
</dbReference>
<dbReference type="FunFam" id="1.10.357.10:FF:000002">
    <property type="entry name" value="Nucleoid occlusion factor SlmA"/>
    <property type="match status" value="1"/>
</dbReference>
<dbReference type="Gene3D" id="1.10.357.10">
    <property type="entry name" value="Tetracycline Repressor, domain 2"/>
    <property type="match status" value="1"/>
</dbReference>
<dbReference type="HAMAP" id="MF_01839">
    <property type="entry name" value="NO_factor_SlmA"/>
    <property type="match status" value="1"/>
</dbReference>
<dbReference type="InterPro" id="IPR023772">
    <property type="entry name" value="DNA-bd_HTH_TetR-type_CS"/>
</dbReference>
<dbReference type="InterPro" id="IPR009057">
    <property type="entry name" value="Homeodomain-like_sf"/>
</dbReference>
<dbReference type="InterPro" id="IPR050109">
    <property type="entry name" value="HTH-type_TetR-like_transc_reg"/>
</dbReference>
<dbReference type="InterPro" id="IPR001647">
    <property type="entry name" value="HTH_TetR"/>
</dbReference>
<dbReference type="InterPro" id="IPR023769">
    <property type="entry name" value="NO_SlmA"/>
</dbReference>
<dbReference type="InterPro" id="IPR054580">
    <property type="entry name" value="SlmA-like_C"/>
</dbReference>
<dbReference type="InterPro" id="IPR036271">
    <property type="entry name" value="Tet_transcr_reg_TetR-rel_C_sf"/>
</dbReference>
<dbReference type="NCBIfam" id="NF007015">
    <property type="entry name" value="PRK09480.1"/>
    <property type="match status" value="1"/>
</dbReference>
<dbReference type="PANTHER" id="PTHR30055">
    <property type="entry name" value="HTH-TYPE TRANSCRIPTIONAL REGULATOR RUTR"/>
    <property type="match status" value="1"/>
</dbReference>
<dbReference type="PANTHER" id="PTHR30055:SF183">
    <property type="entry name" value="NUCLEOID OCCLUSION FACTOR SLMA"/>
    <property type="match status" value="1"/>
</dbReference>
<dbReference type="Pfam" id="PF22276">
    <property type="entry name" value="SlmA-like_C"/>
    <property type="match status" value="1"/>
</dbReference>
<dbReference type="Pfam" id="PF00440">
    <property type="entry name" value="TetR_N"/>
    <property type="match status" value="1"/>
</dbReference>
<dbReference type="SUPFAM" id="SSF46689">
    <property type="entry name" value="Homeodomain-like"/>
    <property type="match status" value="1"/>
</dbReference>
<dbReference type="SUPFAM" id="SSF48498">
    <property type="entry name" value="Tetracyclin repressor-like, C-terminal domain"/>
    <property type="match status" value="1"/>
</dbReference>
<dbReference type="PROSITE" id="PS01081">
    <property type="entry name" value="HTH_TETR_1"/>
    <property type="match status" value="1"/>
</dbReference>
<dbReference type="PROSITE" id="PS50977">
    <property type="entry name" value="HTH_TETR_2"/>
    <property type="match status" value="1"/>
</dbReference>
<evidence type="ECO:0000255" key="1">
    <source>
        <dbReference type="HAMAP-Rule" id="MF_01839"/>
    </source>
</evidence>
<comment type="function">
    <text evidence="1">Required for nucleoid occlusion (NO) phenomenon, which prevents Z-ring formation and cell division over the nucleoid. Acts as a DNA-associated cell division inhibitor that binds simultaneously chromosomal DNA and FtsZ, and disrupts the assembly of FtsZ polymers. SlmA-DNA-binding sequences (SBS) are dispersed on non-Ter regions of the chromosome, preventing FtsZ polymerization at these regions.</text>
</comment>
<comment type="subunit">
    <text evidence="1">Homodimer. Interacts with FtsZ.</text>
</comment>
<comment type="subcellular location">
    <subcellularLocation>
        <location evidence="1">Cytoplasm</location>
        <location evidence="1">Nucleoid</location>
    </subcellularLocation>
</comment>
<comment type="similarity">
    <text evidence="1">Belongs to the nucleoid occlusion factor SlmA family.</text>
</comment>
<gene>
    <name evidence="1" type="primary">slmA</name>
    <name type="ordered locus">BWG_3332</name>
</gene>
<accession>C4ZXN3</accession>